<sequence>MEGSPIPVLTVPTAPYEDQRPTGGGGLRRPTGLFEGQRNYLPNFIQSVLSSIDLRDRQGCTMVVGSDGRYFSRTATEIVVQMAAANGIGRLIIGQNGILSTPAVSCIIRKIKAAGGIILTASHCPGGPGGEFGVKFNVANGGPAPDVVSDKIYQISKTIEEYTICPDLRIDLSRLGRQEFDLENKFKPFRVEIVDPVDIYLNLLRTIFDFNAIKSLLTGPSQLKIRVDAMHGVMGPYVRKVLCDELGAPANSAINCVPLEDFGGQHPDPNLTYATTLLEAMKGGEYGFGAAFDADGDRYMILGQNGFFVSPSDSLAIIAANLSCIPYFRQMGVRGFGRSMPTSMALDRVAKSMKVPVYETPAGWRFFSNLMDSGRCSLCGEESFGTGSDHLREKDGLWAVLVWLSIIAARKQSVEEIVRDHWAKYGRHYYCRVLYEAKSPKATYYIMRDLEALVTDKSFIGQQFAVGSHIYSIAKTDSFEYVDPVDGTVTKKQGLRIIFSDASRLIFRLSSSSGVRATIRLYAESYERDPSGHDQEPQAVLSPLIAIALKISQIHERTGRRGPTVIT</sequence>
<keyword id="KW-0130">Cell adhesion</keyword>
<keyword id="KW-0965">Cell junction</keyword>
<keyword id="KW-1003">Cell membrane</keyword>
<keyword id="KW-0963">Cytoplasm</keyword>
<keyword id="KW-0206">Cytoskeleton</keyword>
<keyword id="KW-0472">Membrane</keyword>
<keyword id="KW-0597">Phosphoprotein</keyword>
<keyword id="KW-1185">Reference proteome</keyword>
<gene>
    <name evidence="6" type="primary">Pgm5</name>
</gene>
<proteinExistence type="evidence at protein level"/>
<organism>
    <name type="scientific">Rattus norvegicus</name>
    <name type="common">Rat</name>
    <dbReference type="NCBI Taxonomy" id="10116"/>
    <lineage>
        <taxon>Eukaryota</taxon>
        <taxon>Metazoa</taxon>
        <taxon>Chordata</taxon>
        <taxon>Craniata</taxon>
        <taxon>Vertebrata</taxon>
        <taxon>Euteleostomi</taxon>
        <taxon>Mammalia</taxon>
        <taxon>Eutheria</taxon>
        <taxon>Euarchontoglires</taxon>
        <taxon>Glires</taxon>
        <taxon>Rodentia</taxon>
        <taxon>Myomorpha</taxon>
        <taxon>Muroidea</taxon>
        <taxon>Muridae</taxon>
        <taxon>Murinae</taxon>
        <taxon>Rattus</taxon>
    </lineage>
</organism>
<protein>
    <recommendedName>
        <fullName>Phosphoglucomutase-like protein 5</fullName>
    </recommendedName>
</protein>
<comment type="function">
    <text evidence="1">Component of adherens-type cell-cell and cell-matrix junctions. Has no phosphoglucomutase activity in vitro.</text>
</comment>
<comment type="subunit">
    <text evidence="2 4">Interacts with DMD/dystrophin; the interaction is direct (By similarity). Interacts with UTRN/utrophin (PubMed:7890770).</text>
</comment>
<comment type="subcellular location">
    <subcellularLocation>
        <location evidence="1">Cell junction</location>
        <location evidence="1">Adherens junction</location>
    </subcellularLocation>
    <subcellularLocation>
        <location evidence="1">Cytoplasm</location>
        <location evidence="1">Cytoskeleton</location>
    </subcellularLocation>
    <subcellularLocation>
        <location evidence="2">Cell membrane</location>
        <location evidence="2">Sarcolemma</location>
    </subcellularLocation>
    <text evidence="1">Concentrated in focal contacts at the ends of actin bundles, and associated with actin filaments.</text>
</comment>
<comment type="similarity">
    <text evidence="5">Belongs to the phosphohexose mutase family.</text>
</comment>
<feature type="chain" id="PRO_0000455425" description="Phosphoglucomutase-like protein 5">
    <location>
        <begin position="1"/>
        <end position="567"/>
    </location>
</feature>
<feature type="region of interest" description="Disordered" evidence="3">
    <location>
        <begin position="1"/>
        <end position="26"/>
    </location>
</feature>
<feature type="modified residue" description="Phosphothreonine" evidence="2">
    <location>
        <position position="120"/>
    </location>
</feature>
<feature type="modified residue" description="Phosphoserine" evidence="2">
    <location>
        <position position="122"/>
    </location>
</feature>
<reference key="1">
    <citation type="journal article" date="2004" name="Nature">
        <title>Genome sequence of the Brown Norway rat yields insights into mammalian evolution.</title>
        <authorList>
            <person name="Gibbs R.A."/>
            <person name="Weinstock G.M."/>
            <person name="Metzker M.L."/>
            <person name="Muzny D.M."/>
            <person name="Sodergren E.J."/>
            <person name="Scherer S."/>
            <person name="Scott G."/>
            <person name="Steffen D."/>
            <person name="Worley K.C."/>
            <person name="Burch P.E."/>
            <person name="Okwuonu G."/>
            <person name="Hines S."/>
            <person name="Lewis L."/>
            <person name="Deramo C."/>
            <person name="Delgado O."/>
            <person name="Dugan-Rocha S."/>
            <person name="Miner G."/>
            <person name="Morgan M."/>
            <person name="Hawes A."/>
            <person name="Gill R."/>
            <person name="Holt R.A."/>
            <person name="Adams M.D."/>
            <person name="Amanatides P.G."/>
            <person name="Baden-Tillson H."/>
            <person name="Barnstead M."/>
            <person name="Chin S."/>
            <person name="Evans C.A."/>
            <person name="Ferriera S."/>
            <person name="Fosler C."/>
            <person name="Glodek A."/>
            <person name="Gu Z."/>
            <person name="Jennings D."/>
            <person name="Kraft C.L."/>
            <person name="Nguyen T."/>
            <person name="Pfannkoch C.M."/>
            <person name="Sitter C."/>
            <person name="Sutton G.G."/>
            <person name="Venter J.C."/>
            <person name="Woodage T."/>
            <person name="Smith D."/>
            <person name="Lee H.-M."/>
            <person name="Gustafson E."/>
            <person name="Cahill P."/>
            <person name="Kana A."/>
            <person name="Doucette-Stamm L."/>
            <person name="Weinstock K."/>
            <person name="Fechtel K."/>
            <person name="Weiss R.B."/>
            <person name="Dunn D.M."/>
            <person name="Green E.D."/>
            <person name="Blakesley R.W."/>
            <person name="Bouffard G.G."/>
            <person name="De Jong P.J."/>
            <person name="Osoegawa K."/>
            <person name="Zhu B."/>
            <person name="Marra M."/>
            <person name="Schein J."/>
            <person name="Bosdet I."/>
            <person name="Fjell C."/>
            <person name="Jones S."/>
            <person name="Krzywinski M."/>
            <person name="Mathewson C."/>
            <person name="Siddiqui A."/>
            <person name="Wye N."/>
            <person name="McPherson J."/>
            <person name="Zhao S."/>
            <person name="Fraser C.M."/>
            <person name="Shetty J."/>
            <person name="Shatsman S."/>
            <person name="Geer K."/>
            <person name="Chen Y."/>
            <person name="Abramzon S."/>
            <person name="Nierman W.C."/>
            <person name="Havlak P.H."/>
            <person name="Chen R."/>
            <person name="Durbin K.J."/>
            <person name="Egan A."/>
            <person name="Ren Y."/>
            <person name="Song X.-Z."/>
            <person name="Li B."/>
            <person name="Liu Y."/>
            <person name="Qin X."/>
            <person name="Cawley S."/>
            <person name="Cooney A.J."/>
            <person name="D'Souza L.M."/>
            <person name="Martin K."/>
            <person name="Wu J.Q."/>
            <person name="Gonzalez-Garay M.L."/>
            <person name="Jackson A.R."/>
            <person name="Kalafus K.J."/>
            <person name="McLeod M.P."/>
            <person name="Milosavljevic A."/>
            <person name="Virk D."/>
            <person name="Volkov A."/>
            <person name="Wheeler D.A."/>
            <person name="Zhang Z."/>
            <person name="Bailey J.A."/>
            <person name="Eichler E.E."/>
            <person name="Tuzun E."/>
            <person name="Birney E."/>
            <person name="Mongin E."/>
            <person name="Ureta-Vidal A."/>
            <person name="Woodwark C."/>
            <person name="Zdobnov E."/>
            <person name="Bork P."/>
            <person name="Suyama M."/>
            <person name="Torrents D."/>
            <person name="Alexandersson M."/>
            <person name="Trask B.J."/>
            <person name="Young J.M."/>
            <person name="Huang H."/>
            <person name="Wang H."/>
            <person name="Xing H."/>
            <person name="Daniels S."/>
            <person name="Gietzen D."/>
            <person name="Schmidt J."/>
            <person name="Stevens K."/>
            <person name="Vitt U."/>
            <person name="Wingrove J."/>
            <person name="Camara F."/>
            <person name="Mar Alba M."/>
            <person name="Abril J.F."/>
            <person name="Guigo R."/>
            <person name="Smit A."/>
            <person name="Dubchak I."/>
            <person name="Rubin E.M."/>
            <person name="Couronne O."/>
            <person name="Poliakov A."/>
            <person name="Huebner N."/>
            <person name="Ganten D."/>
            <person name="Goesele C."/>
            <person name="Hummel O."/>
            <person name="Kreitler T."/>
            <person name="Lee Y.-A."/>
            <person name="Monti J."/>
            <person name="Schulz H."/>
            <person name="Zimdahl H."/>
            <person name="Himmelbauer H."/>
            <person name="Lehrach H."/>
            <person name="Jacob H.J."/>
            <person name="Bromberg S."/>
            <person name="Gullings-Handley J."/>
            <person name="Jensen-Seaman M.I."/>
            <person name="Kwitek A.E."/>
            <person name="Lazar J."/>
            <person name="Pasko D."/>
            <person name="Tonellato P.J."/>
            <person name="Twigger S."/>
            <person name="Ponting C.P."/>
            <person name="Duarte J.M."/>
            <person name="Rice S."/>
            <person name="Goodstadt L."/>
            <person name="Beatson S.A."/>
            <person name="Emes R.D."/>
            <person name="Winter E.E."/>
            <person name="Webber C."/>
            <person name="Brandt P."/>
            <person name="Nyakatura G."/>
            <person name="Adetobi M."/>
            <person name="Chiaromonte F."/>
            <person name="Elnitski L."/>
            <person name="Eswara P."/>
            <person name="Hardison R.C."/>
            <person name="Hou M."/>
            <person name="Kolbe D."/>
            <person name="Makova K."/>
            <person name="Miller W."/>
            <person name="Nekrutenko A."/>
            <person name="Riemer C."/>
            <person name="Schwartz S."/>
            <person name="Taylor J."/>
            <person name="Yang S."/>
            <person name="Zhang Y."/>
            <person name="Lindpaintner K."/>
            <person name="Andrews T.D."/>
            <person name="Caccamo M."/>
            <person name="Clamp M."/>
            <person name="Clarke L."/>
            <person name="Curwen V."/>
            <person name="Durbin R.M."/>
            <person name="Eyras E."/>
            <person name="Searle S.M."/>
            <person name="Cooper G.M."/>
            <person name="Batzoglou S."/>
            <person name="Brudno M."/>
            <person name="Sidow A."/>
            <person name="Stone E.A."/>
            <person name="Payseur B.A."/>
            <person name="Bourque G."/>
            <person name="Lopez-Otin C."/>
            <person name="Puente X.S."/>
            <person name="Chakrabarti K."/>
            <person name="Chatterji S."/>
            <person name="Dewey C."/>
            <person name="Pachter L."/>
            <person name="Bray N."/>
            <person name="Yap V.B."/>
            <person name="Caspi A."/>
            <person name="Tesler G."/>
            <person name="Pevzner P.A."/>
            <person name="Haussler D."/>
            <person name="Roskin K.M."/>
            <person name="Baertsch R."/>
            <person name="Clawson H."/>
            <person name="Furey T.S."/>
            <person name="Hinrichs A.S."/>
            <person name="Karolchik D."/>
            <person name="Kent W.J."/>
            <person name="Rosenbloom K.R."/>
            <person name="Trumbower H."/>
            <person name="Weirauch M."/>
            <person name="Cooper D.N."/>
            <person name="Stenson P.D."/>
            <person name="Ma B."/>
            <person name="Brent M."/>
            <person name="Arumugam M."/>
            <person name="Shteynberg D."/>
            <person name="Copley R.R."/>
            <person name="Taylor M.S."/>
            <person name="Riethman H."/>
            <person name="Mudunuri U."/>
            <person name="Peterson J."/>
            <person name="Guyer M."/>
            <person name="Felsenfeld A."/>
            <person name="Old S."/>
            <person name="Mockrin S."/>
            <person name="Collins F.S."/>
        </authorList>
    </citation>
    <scope>NUCLEOTIDE SEQUENCE [LARGE SCALE GENOMIC DNA]</scope>
    <source>
        <strain>Brown Norway</strain>
    </source>
</reference>
<reference key="2">
    <citation type="journal article" date="1995" name="J. Biol. Chem.">
        <title>Association of aciculin with dystrophin and utrophin.</title>
        <authorList>
            <person name="Belkin A.M."/>
            <person name="Burridge K."/>
        </authorList>
    </citation>
    <scope>INTERACTION WITH UTRN</scope>
</reference>
<reference evidence="7" key="3">
    <citation type="journal article" date="2012" name="Nat. Commun.">
        <title>Quantitative maps of protein phosphorylation sites across 14 different rat organs and tissues.</title>
        <authorList>
            <person name="Lundby A."/>
            <person name="Secher A."/>
            <person name="Lage K."/>
            <person name="Nordsborg N.B."/>
            <person name="Dmytriyev A."/>
            <person name="Lundby C."/>
            <person name="Olsen J.V."/>
        </authorList>
    </citation>
    <scope>IDENTIFICATION BY MASS SPECTROMETRY [LARGE SCALE ANALYSIS]</scope>
</reference>
<dbReference type="EMBL" id="AABR07006615">
    <property type="status" value="NOT_ANNOTATED_CDS"/>
    <property type="molecule type" value="Genomic_DNA"/>
</dbReference>
<dbReference type="EMBL" id="AABR07006616">
    <property type="status" value="NOT_ANNOTATED_CDS"/>
    <property type="molecule type" value="Genomic_DNA"/>
</dbReference>
<dbReference type="EMBL" id="AABR07006617">
    <property type="status" value="NOT_ANNOTATED_CDS"/>
    <property type="molecule type" value="Genomic_DNA"/>
</dbReference>
<dbReference type="EMBL" id="AABR07006618">
    <property type="status" value="NOT_ANNOTATED_CDS"/>
    <property type="molecule type" value="Genomic_DNA"/>
</dbReference>
<dbReference type="SMR" id="D3ZVR9"/>
<dbReference type="FunCoup" id="D3ZVR9">
    <property type="interactions" value="313"/>
</dbReference>
<dbReference type="STRING" id="10116.ENSRNOP00000020763"/>
<dbReference type="iPTMnet" id="D3ZVR9"/>
<dbReference type="PhosphoSitePlus" id="D3ZVR9"/>
<dbReference type="PaxDb" id="10116-ENSRNOP00000020763"/>
<dbReference type="PeptideAtlas" id="D3ZVR9"/>
<dbReference type="Ensembl" id="ENSRNOT00000020763.8">
    <property type="protein sequence ID" value="ENSRNOP00000020763.6"/>
    <property type="gene ID" value="ENSRNOG00000015406.8"/>
</dbReference>
<dbReference type="UCSC" id="RGD:1307969">
    <property type="organism name" value="rat"/>
</dbReference>
<dbReference type="AGR" id="RGD:1307969"/>
<dbReference type="RGD" id="1307969">
    <property type="gene designation" value="Pgm5"/>
</dbReference>
<dbReference type="eggNOG" id="KOG0625">
    <property type="taxonomic scope" value="Eukaryota"/>
</dbReference>
<dbReference type="GeneTree" id="ENSGT00940000158126"/>
<dbReference type="HOGENOM" id="CLU_009330_0_1_1"/>
<dbReference type="InParanoid" id="D3ZVR9"/>
<dbReference type="OMA" id="YIPDYAG"/>
<dbReference type="TreeFam" id="TF300350"/>
<dbReference type="PRO" id="PR:D3ZVR9"/>
<dbReference type="Proteomes" id="UP000002494">
    <property type="component" value="Chromosome 1"/>
</dbReference>
<dbReference type="Bgee" id="ENSRNOG00000015406">
    <property type="expression patterns" value="Expressed in heart and 18 other cell types or tissues"/>
</dbReference>
<dbReference type="GO" id="GO:0005912">
    <property type="term" value="C:adherens junction"/>
    <property type="evidence" value="ECO:0000266"/>
    <property type="project" value="RGD"/>
</dbReference>
<dbReference type="GO" id="GO:0030055">
    <property type="term" value="C:cell-substrate junction"/>
    <property type="evidence" value="ECO:0000266"/>
    <property type="project" value="RGD"/>
</dbReference>
<dbReference type="GO" id="GO:0043034">
    <property type="term" value="C:costamere"/>
    <property type="evidence" value="ECO:0000266"/>
    <property type="project" value="RGD"/>
</dbReference>
<dbReference type="GO" id="GO:0009898">
    <property type="term" value="C:cytoplasmic side of plasma membrane"/>
    <property type="evidence" value="ECO:0000266"/>
    <property type="project" value="RGD"/>
</dbReference>
<dbReference type="GO" id="GO:0005829">
    <property type="term" value="C:cytosol"/>
    <property type="evidence" value="ECO:0000318"/>
    <property type="project" value="GO_Central"/>
</dbReference>
<dbReference type="GO" id="GO:0016010">
    <property type="term" value="C:dystrophin-associated glycoprotein complex"/>
    <property type="evidence" value="ECO:0000266"/>
    <property type="project" value="RGD"/>
</dbReference>
<dbReference type="GO" id="GO:0005925">
    <property type="term" value="C:focal adhesion"/>
    <property type="evidence" value="ECO:0000266"/>
    <property type="project" value="RGD"/>
</dbReference>
<dbReference type="GO" id="GO:0014704">
    <property type="term" value="C:intercalated disc"/>
    <property type="evidence" value="ECO:0000266"/>
    <property type="project" value="RGD"/>
</dbReference>
<dbReference type="GO" id="GO:0042383">
    <property type="term" value="C:sarcolemma"/>
    <property type="evidence" value="ECO:0000266"/>
    <property type="project" value="RGD"/>
</dbReference>
<dbReference type="GO" id="GO:0005914">
    <property type="term" value="C:spot adherens junction"/>
    <property type="evidence" value="ECO:0000266"/>
    <property type="project" value="RGD"/>
</dbReference>
<dbReference type="GO" id="GO:0001725">
    <property type="term" value="C:stress fiber"/>
    <property type="evidence" value="ECO:0000266"/>
    <property type="project" value="RGD"/>
</dbReference>
<dbReference type="GO" id="GO:0030018">
    <property type="term" value="C:Z disc"/>
    <property type="evidence" value="ECO:0000266"/>
    <property type="project" value="RGD"/>
</dbReference>
<dbReference type="GO" id="GO:0000287">
    <property type="term" value="F:magnesium ion binding"/>
    <property type="evidence" value="ECO:0007669"/>
    <property type="project" value="InterPro"/>
</dbReference>
<dbReference type="GO" id="GO:0005975">
    <property type="term" value="P:carbohydrate metabolic process"/>
    <property type="evidence" value="ECO:0000318"/>
    <property type="project" value="GO_Central"/>
</dbReference>
<dbReference type="GO" id="GO:0007155">
    <property type="term" value="P:cell adhesion"/>
    <property type="evidence" value="ECO:0007669"/>
    <property type="project" value="UniProtKB-KW"/>
</dbReference>
<dbReference type="GO" id="GO:0030239">
    <property type="term" value="P:myofibril assembly"/>
    <property type="evidence" value="ECO:0000318"/>
    <property type="project" value="GO_Central"/>
</dbReference>
<dbReference type="GO" id="GO:0014706">
    <property type="term" value="P:striated muscle tissue development"/>
    <property type="evidence" value="ECO:0000318"/>
    <property type="project" value="GO_Central"/>
</dbReference>
<dbReference type="FunFam" id="3.30.310.50:FF:000002">
    <property type="entry name" value="Phosphoglucomutase 5"/>
    <property type="match status" value="1"/>
</dbReference>
<dbReference type="FunFam" id="3.40.120.10:FF:000004">
    <property type="entry name" value="Phosphoglucomutase 5"/>
    <property type="match status" value="1"/>
</dbReference>
<dbReference type="FunFam" id="3.40.120.10:FF:000005">
    <property type="entry name" value="Phosphoglucomutase 5"/>
    <property type="match status" value="1"/>
</dbReference>
<dbReference type="FunFam" id="3.40.120.10:FF:000007">
    <property type="entry name" value="Phosphoglucomutase 5"/>
    <property type="match status" value="1"/>
</dbReference>
<dbReference type="Gene3D" id="3.40.120.10">
    <property type="entry name" value="Alpha-D-Glucose-1,6-Bisphosphate, subunit A, domain 3"/>
    <property type="match status" value="3"/>
</dbReference>
<dbReference type="Gene3D" id="3.30.310.50">
    <property type="entry name" value="Alpha-D-phosphohexomutase, C-terminal domain"/>
    <property type="match status" value="1"/>
</dbReference>
<dbReference type="InterPro" id="IPR005844">
    <property type="entry name" value="A-D-PHexomutase_a/b/a-I"/>
</dbReference>
<dbReference type="InterPro" id="IPR016055">
    <property type="entry name" value="A-D-PHexomutase_a/b/a-I/II/III"/>
</dbReference>
<dbReference type="InterPro" id="IPR005845">
    <property type="entry name" value="A-D-PHexomutase_a/b/a-II"/>
</dbReference>
<dbReference type="InterPro" id="IPR005846">
    <property type="entry name" value="A-D-PHexomutase_a/b/a-III"/>
</dbReference>
<dbReference type="InterPro" id="IPR036900">
    <property type="entry name" value="A-D-PHexomutase_C_sf"/>
</dbReference>
<dbReference type="InterPro" id="IPR016066">
    <property type="entry name" value="A-D-PHexomutase_CS"/>
</dbReference>
<dbReference type="InterPro" id="IPR005841">
    <property type="entry name" value="Alpha-D-phosphohexomutase_SF"/>
</dbReference>
<dbReference type="InterPro" id="IPR045244">
    <property type="entry name" value="PGM"/>
</dbReference>
<dbReference type="NCBIfam" id="NF005737">
    <property type="entry name" value="PRK07564.1-1"/>
    <property type="match status" value="1"/>
</dbReference>
<dbReference type="PANTHER" id="PTHR22573:SF27">
    <property type="entry name" value="PHOSPHOGLUCOMUTASE-LIKE PROTEIN 5"/>
    <property type="match status" value="1"/>
</dbReference>
<dbReference type="PANTHER" id="PTHR22573">
    <property type="entry name" value="PHOSPHOHEXOMUTASE FAMILY MEMBER"/>
    <property type="match status" value="1"/>
</dbReference>
<dbReference type="Pfam" id="PF24947">
    <property type="entry name" value="PGM1_C_vert_fung"/>
    <property type="match status" value="1"/>
</dbReference>
<dbReference type="Pfam" id="PF02878">
    <property type="entry name" value="PGM_PMM_I"/>
    <property type="match status" value="1"/>
</dbReference>
<dbReference type="Pfam" id="PF02879">
    <property type="entry name" value="PGM_PMM_II"/>
    <property type="match status" value="1"/>
</dbReference>
<dbReference type="Pfam" id="PF02880">
    <property type="entry name" value="PGM_PMM_III"/>
    <property type="match status" value="1"/>
</dbReference>
<dbReference type="PRINTS" id="PR00509">
    <property type="entry name" value="PGMPMM"/>
</dbReference>
<dbReference type="SUPFAM" id="SSF55957">
    <property type="entry name" value="Phosphoglucomutase, C-terminal domain"/>
    <property type="match status" value="1"/>
</dbReference>
<dbReference type="SUPFAM" id="SSF53738">
    <property type="entry name" value="Phosphoglucomutase, first 3 domains"/>
    <property type="match status" value="3"/>
</dbReference>
<dbReference type="PROSITE" id="PS00710">
    <property type="entry name" value="PGM_PMM"/>
    <property type="match status" value="1"/>
</dbReference>
<name>PGM5_RAT</name>
<evidence type="ECO:0000250" key="1">
    <source>
        <dbReference type="UniProtKB" id="Q15124"/>
    </source>
</evidence>
<evidence type="ECO:0000250" key="2">
    <source>
        <dbReference type="UniProtKB" id="Q8BZF8"/>
    </source>
</evidence>
<evidence type="ECO:0000256" key="3">
    <source>
        <dbReference type="SAM" id="MobiDB-lite"/>
    </source>
</evidence>
<evidence type="ECO:0000269" key="4">
    <source>
    </source>
</evidence>
<evidence type="ECO:0000305" key="5"/>
<evidence type="ECO:0000312" key="6">
    <source>
        <dbReference type="RGD" id="1307969"/>
    </source>
</evidence>
<evidence type="ECO:0007744" key="7">
    <source>
    </source>
</evidence>
<accession>D3ZVR9</accession>